<evidence type="ECO:0000255" key="1">
    <source>
        <dbReference type="HAMAP-Rule" id="MF_00600"/>
    </source>
</evidence>
<evidence type="ECO:0000256" key="2">
    <source>
        <dbReference type="SAM" id="MobiDB-lite"/>
    </source>
</evidence>
<accession>Q2JFC5</accession>
<dbReference type="EC" id="5.6.1.7" evidence="1"/>
<dbReference type="EMBL" id="CP000249">
    <property type="protein sequence ID" value="ABD10017.1"/>
    <property type="molecule type" value="Genomic_DNA"/>
</dbReference>
<dbReference type="SMR" id="Q2JFC5"/>
<dbReference type="STRING" id="106370.Francci3_0633"/>
<dbReference type="KEGG" id="fra:Francci3_0633"/>
<dbReference type="eggNOG" id="COG0459">
    <property type="taxonomic scope" value="Bacteria"/>
</dbReference>
<dbReference type="HOGENOM" id="CLU_016503_6_1_11"/>
<dbReference type="OrthoDB" id="9766614at2"/>
<dbReference type="PhylomeDB" id="Q2JFC5"/>
<dbReference type="Proteomes" id="UP000001937">
    <property type="component" value="Chromosome"/>
</dbReference>
<dbReference type="GO" id="GO:0005737">
    <property type="term" value="C:cytoplasm"/>
    <property type="evidence" value="ECO:0007669"/>
    <property type="project" value="UniProtKB-SubCell"/>
</dbReference>
<dbReference type="GO" id="GO:0005524">
    <property type="term" value="F:ATP binding"/>
    <property type="evidence" value="ECO:0007669"/>
    <property type="project" value="UniProtKB-UniRule"/>
</dbReference>
<dbReference type="GO" id="GO:0140662">
    <property type="term" value="F:ATP-dependent protein folding chaperone"/>
    <property type="evidence" value="ECO:0007669"/>
    <property type="project" value="InterPro"/>
</dbReference>
<dbReference type="GO" id="GO:0016853">
    <property type="term" value="F:isomerase activity"/>
    <property type="evidence" value="ECO:0007669"/>
    <property type="project" value="UniProtKB-KW"/>
</dbReference>
<dbReference type="GO" id="GO:0051082">
    <property type="term" value="F:unfolded protein binding"/>
    <property type="evidence" value="ECO:0007669"/>
    <property type="project" value="UniProtKB-UniRule"/>
</dbReference>
<dbReference type="GO" id="GO:0042026">
    <property type="term" value="P:protein refolding"/>
    <property type="evidence" value="ECO:0007669"/>
    <property type="project" value="UniProtKB-UniRule"/>
</dbReference>
<dbReference type="CDD" id="cd03344">
    <property type="entry name" value="GroEL"/>
    <property type="match status" value="1"/>
</dbReference>
<dbReference type="FunFam" id="3.50.7.10:FF:000001">
    <property type="entry name" value="60 kDa chaperonin"/>
    <property type="match status" value="1"/>
</dbReference>
<dbReference type="Gene3D" id="3.50.7.10">
    <property type="entry name" value="GroEL"/>
    <property type="match status" value="1"/>
</dbReference>
<dbReference type="Gene3D" id="1.10.560.10">
    <property type="entry name" value="GroEL-like equatorial domain"/>
    <property type="match status" value="1"/>
</dbReference>
<dbReference type="Gene3D" id="3.30.260.10">
    <property type="entry name" value="TCP-1-like chaperonin intermediate domain"/>
    <property type="match status" value="1"/>
</dbReference>
<dbReference type="HAMAP" id="MF_00600">
    <property type="entry name" value="CH60"/>
    <property type="match status" value="1"/>
</dbReference>
<dbReference type="InterPro" id="IPR018370">
    <property type="entry name" value="Chaperonin_Cpn60_CS"/>
</dbReference>
<dbReference type="InterPro" id="IPR001844">
    <property type="entry name" value="Cpn60/GroEL"/>
</dbReference>
<dbReference type="InterPro" id="IPR002423">
    <property type="entry name" value="Cpn60/GroEL/TCP-1"/>
</dbReference>
<dbReference type="InterPro" id="IPR027409">
    <property type="entry name" value="GroEL-like_apical_dom_sf"/>
</dbReference>
<dbReference type="InterPro" id="IPR027413">
    <property type="entry name" value="GROEL-like_equatorial_sf"/>
</dbReference>
<dbReference type="InterPro" id="IPR027410">
    <property type="entry name" value="TCP-1-like_intermed_sf"/>
</dbReference>
<dbReference type="NCBIfam" id="TIGR02348">
    <property type="entry name" value="GroEL"/>
    <property type="match status" value="1"/>
</dbReference>
<dbReference type="NCBIfam" id="NF000592">
    <property type="entry name" value="PRK00013.1"/>
    <property type="match status" value="1"/>
</dbReference>
<dbReference type="NCBIfam" id="NF009487">
    <property type="entry name" value="PRK12849.1"/>
    <property type="match status" value="1"/>
</dbReference>
<dbReference type="NCBIfam" id="NF009488">
    <property type="entry name" value="PRK12850.1"/>
    <property type="match status" value="1"/>
</dbReference>
<dbReference type="NCBIfam" id="NF009489">
    <property type="entry name" value="PRK12851.1"/>
    <property type="match status" value="1"/>
</dbReference>
<dbReference type="PANTHER" id="PTHR45633">
    <property type="entry name" value="60 KDA HEAT SHOCK PROTEIN, MITOCHONDRIAL"/>
    <property type="match status" value="1"/>
</dbReference>
<dbReference type="Pfam" id="PF00118">
    <property type="entry name" value="Cpn60_TCP1"/>
    <property type="match status" value="1"/>
</dbReference>
<dbReference type="PRINTS" id="PR00298">
    <property type="entry name" value="CHAPERONIN60"/>
</dbReference>
<dbReference type="SUPFAM" id="SSF52029">
    <property type="entry name" value="GroEL apical domain-like"/>
    <property type="match status" value="1"/>
</dbReference>
<dbReference type="SUPFAM" id="SSF48592">
    <property type="entry name" value="GroEL equatorial domain-like"/>
    <property type="match status" value="1"/>
</dbReference>
<dbReference type="SUPFAM" id="SSF54849">
    <property type="entry name" value="GroEL-intermediate domain like"/>
    <property type="match status" value="1"/>
</dbReference>
<dbReference type="PROSITE" id="PS00296">
    <property type="entry name" value="CHAPERONINS_CPN60"/>
    <property type="match status" value="1"/>
</dbReference>
<comment type="function">
    <text evidence="1">Together with its co-chaperonin GroES, plays an essential role in assisting protein folding. The GroEL-GroES system forms a nano-cage that allows encapsulation of the non-native substrate proteins and provides a physical environment optimized to promote and accelerate protein folding.</text>
</comment>
<comment type="catalytic activity">
    <reaction evidence="1">
        <text>ATP + H2O + a folded polypeptide = ADP + phosphate + an unfolded polypeptide.</text>
        <dbReference type="EC" id="5.6.1.7"/>
    </reaction>
</comment>
<comment type="subunit">
    <text evidence="1">Forms a cylinder of 14 subunits composed of two heptameric rings stacked back-to-back. Interacts with the co-chaperonin GroES.</text>
</comment>
<comment type="subcellular location">
    <subcellularLocation>
        <location evidence="1">Cytoplasm</location>
    </subcellularLocation>
</comment>
<comment type="similarity">
    <text evidence="1">Belongs to the chaperonin (HSP60) family.</text>
</comment>
<protein>
    <recommendedName>
        <fullName evidence="1">Chaperonin GroEL 1</fullName>
        <ecNumber evidence="1">5.6.1.7</ecNumber>
    </recommendedName>
    <alternativeName>
        <fullName evidence="1">60 kDa chaperonin 1</fullName>
    </alternativeName>
    <alternativeName>
        <fullName evidence="1">Chaperonin-60 1</fullName>
        <shortName evidence="1">Cpn60 1</shortName>
    </alternativeName>
</protein>
<sequence length="546" mass="57446">MPKILTFNEDARRALEHGVNALANAVKVTIGPRGRNVVIDKHYGAATITNDGVTIAREIELEDPYENLGAQLAKEVATKTNDVAGDGTTTATVLAQEMVRFGLKQVTAGAAPLTLKLGIEAAVEAVSAALLKQAIEVNSKETIAQVAAISAQDPQVGELIAEAIDKIGKDGVITVEESQTLGLDLELTEGMQFDKGYISPYFVTDAEAQEAVLEDAYVLLYPGKISALNEILPVLEQVVQERKPLLIIAEEVEGEALSTLVVNSIRKTFQVVAVKAPGFGDRRKALLQDIAVLTGGQVVASEVGLSLDAVTLADLGRARRVVVDKDNTTIVDGVGEASSIADRVRQLKQEIEVSDSDWDREKLQERLAKLAGGVAVIRVGAATEVELKERKHRLEDAVSATRAAIEEGIIAGGGSALTHVASVLDDGLGRTGDELAGVRIVRRALDAPLSWIARNAGLEGAVIVSKVKELEPGRGYNAATGEYTDLIAAGVIDPVKVTRSAVANAASIAALLITTEGLVVEKPAEPAPQDGHGHGHGHSHPQGPGF</sequence>
<name>CH601_FRACC</name>
<feature type="chain" id="PRO_0000256911" description="Chaperonin GroEL 1">
    <location>
        <begin position="1"/>
        <end position="546"/>
    </location>
</feature>
<feature type="region of interest" description="Disordered" evidence="2">
    <location>
        <begin position="523"/>
        <end position="546"/>
    </location>
</feature>
<feature type="binding site" evidence="1">
    <location>
        <begin position="29"/>
        <end position="32"/>
    </location>
    <ligand>
        <name>ATP</name>
        <dbReference type="ChEBI" id="CHEBI:30616"/>
    </ligand>
</feature>
<feature type="binding site" evidence="1">
    <location>
        <begin position="86"/>
        <end position="90"/>
    </location>
    <ligand>
        <name>ATP</name>
        <dbReference type="ChEBI" id="CHEBI:30616"/>
    </ligand>
</feature>
<feature type="binding site" evidence="1">
    <location>
        <position position="413"/>
    </location>
    <ligand>
        <name>ATP</name>
        <dbReference type="ChEBI" id="CHEBI:30616"/>
    </ligand>
</feature>
<feature type="binding site" evidence="1">
    <location>
        <begin position="477"/>
        <end position="479"/>
    </location>
    <ligand>
        <name>ATP</name>
        <dbReference type="ChEBI" id="CHEBI:30616"/>
    </ligand>
</feature>
<feature type="binding site" evidence="1">
    <location>
        <position position="493"/>
    </location>
    <ligand>
        <name>ATP</name>
        <dbReference type="ChEBI" id="CHEBI:30616"/>
    </ligand>
</feature>
<gene>
    <name evidence="1" type="primary">groEL1</name>
    <name evidence="1" type="synonym">groL1</name>
    <name type="ordered locus">Francci3_0633</name>
</gene>
<reference key="1">
    <citation type="journal article" date="2007" name="Genome Res.">
        <title>Genome characteristics of facultatively symbiotic Frankia sp. strains reflect host range and host plant biogeography.</title>
        <authorList>
            <person name="Normand P."/>
            <person name="Lapierre P."/>
            <person name="Tisa L.S."/>
            <person name="Gogarten J.P."/>
            <person name="Alloisio N."/>
            <person name="Bagnarol E."/>
            <person name="Bassi C.A."/>
            <person name="Berry A.M."/>
            <person name="Bickhart D.M."/>
            <person name="Choisne N."/>
            <person name="Couloux A."/>
            <person name="Cournoyer B."/>
            <person name="Cruveiller S."/>
            <person name="Daubin V."/>
            <person name="Demange N."/>
            <person name="Francino M.P."/>
            <person name="Goltsman E."/>
            <person name="Huang Y."/>
            <person name="Kopp O.R."/>
            <person name="Labarre L."/>
            <person name="Lapidus A."/>
            <person name="Lavire C."/>
            <person name="Marechal J."/>
            <person name="Martinez M."/>
            <person name="Mastronunzio J.E."/>
            <person name="Mullin B.C."/>
            <person name="Niemann J."/>
            <person name="Pujic P."/>
            <person name="Rawnsley T."/>
            <person name="Rouy Z."/>
            <person name="Schenowitz C."/>
            <person name="Sellstedt A."/>
            <person name="Tavares F."/>
            <person name="Tomkins J.P."/>
            <person name="Vallenet D."/>
            <person name="Valverde C."/>
            <person name="Wall L.G."/>
            <person name="Wang Y."/>
            <person name="Medigue C."/>
            <person name="Benson D.R."/>
        </authorList>
    </citation>
    <scope>NUCLEOTIDE SEQUENCE [LARGE SCALE GENOMIC DNA]</scope>
    <source>
        <strain>DSM 45818 / CECT 9043 / HFP020203 / CcI3</strain>
    </source>
</reference>
<proteinExistence type="inferred from homology"/>
<keyword id="KW-0067">ATP-binding</keyword>
<keyword id="KW-0143">Chaperone</keyword>
<keyword id="KW-0963">Cytoplasm</keyword>
<keyword id="KW-0413">Isomerase</keyword>
<keyword id="KW-0547">Nucleotide-binding</keyword>
<keyword id="KW-1185">Reference proteome</keyword>
<organism>
    <name type="scientific">Frankia casuarinae (strain DSM 45818 / CECT 9043 / HFP020203 / CcI3)</name>
    <dbReference type="NCBI Taxonomy" id="106370"/>
    <lineage>
        <taxon>Bacteria</taxon>
        <taxon>Bacillati</taxon>
        <taxon>Actinomycetota</taxon>
        <taxon>Actinomycetes</taxon>
        <taxon>Frankiales</taxon>
        <taxon>Frankiaceae</taxon>
        <taxon>Frankia</taxon>
    </lineage>
</organism>